<sequence length="469" mass="53498">MSQAYSSSQRVSSYRRTFGGAPGFSLGSPLSSPVFPRAGFGTKGSSSSMTSRVYQVSRTSGGAGGLGSLRSSRLGTTRAPSYGAGELLDFSLADAVNQEFLATRTNEKVELQELNDRFANYIEKVRFLEQQNAALAAEVNRLKGREPTRVAELYEEEMRELRRQVEVLTNQRARVDVERDNLIDDLQRLKAKLQEEIQLREEAENNLAAFRADVDAATLARIDLERRIESLNEEIAFLKKVHEEEIRELQAQLQEQQVQVEMDMSKPDLTAALRDIRAQYETIAAKNISEAEEWYKSKVSDLTQAANKNNDALRQAKQEMMEYRHQIQSYTCEIDALKGTNDSLMRQMRELEDRFASEANGYQDNIARLEEEIRHLKDEMARHLREYQDLLNVKMALDVEIATYRKLLEGEESRINLPIQTFSALNFRETSPEQRGSEVHTKKTVMIKTIETRDGEVVSEATQQQHEVL</sequence>
<comment type="function">
    <text evidence="2 8 11 13 15">Muscle-specific type III intermediate filament essential for proper muscular structure and function. Plays a crucial role in maintaining the structure of sarcomeres, inter-connecting the Z-disks and forming the myofibrils, linking them not only to the sarcolemmal cytoskeleton, but also to the nucleus and mitochondria, thus providing strength for the muscle fiber during activity (By similarity). In adult striated muscle they form a fibrous network connecting myofibrils to each other and to the plasma membrane from the periphery of the Z-line structures (PubMed:25394388). May act as a sarcomeric microtubule-anchoring protein: specifically associates with detyrosinated tubulin-alpha chains, leading to buckled microtubules and mechanical resistance to contraction (PubMed:27102488). Required for nuclear membrane integrity, via anchoring at the cell tip and nuclear envelope, resulting in maintenance of microtubule-derived intracellular mechanical forces (PubMed:35959657). Contributes to the transcriptional regulation of the NKX2-5 gene in cardiac progenitor cells during a short period of cardiomyogenesis and in cardiac side population stem cells in the adult. Plays a role in maintaining an optimal conformation of nebulette (NEB) on heart muscle sarcomeres to bind and recruit cardiac alpha-actin (PubMed:27733623).</text>
</comment>
<comment type="subunit">
    <text evidence="2 5 6 7 9 11 16">Homomer (By similarity). Interacts with MTM1 (By similarity). Interacts with DST (PubMed:10357897). Interacts with tubulin-alpha; specifically associates with detyrosinated tubulin-alpha (PubMed:27102488). Interacts with EPPK1; interaction is dependent of higher-order structure of intermediate filament. Interacts with CRYAB (By similarity). Interacts with NEB (via nebulin repeats 160-164) (By similarity). Interacts (via rod region) with NEBL (via nebulin repeats 1-5) (By similarity). Interacts with ASB2 isoform 1; the interaction targets DES for proteasomal degradation (PubMed:26343497). Interacts with PLEC isoform 1C (PubMed:24940650). Interacts with PKP1 (PubMed:10852826). Interacts with FLII (PubMed:37126682).</text>
</comment>
<comment type="interaction">
    <interactant intactId="EBI-298565">
        <id>P31001</id>
    </interactant>
    <interactant intactId="EBI-6861578">
        <id>Q9Z2C5</id>
        <label>Mtm1</label>
    </interactant>
    <organismsDiffer>false</organismsDiffer>
    <experiments>4</experiments>
</comment>
<comment type="interaction">
    <interactant intactId="EBI-298565">
        <id>P31001</id>
    </interactant>
    <interactant intactId="EBI-11600078">
        <id>Q9UBX2</id>
        <label>DUX4</label>
    </interactant>
    <organismsDiffer>true</organismsDiffer>
    <experiments>2</experiments>
</comment>
<comment type="interaction">
    <interactant intactId="EBI-298565">
        <id>P31001</id>
    </interactant>
    <interactant intactId="EBI-2864109">
        <id>Q13496</id>
        <label>MTM1</label>
    </interactant>
    <organismsDiffer>true</organismsDiffer>
    <experiments>4</experiments>
</comment>
<comment type="subcellular location">
    <subcellularLocation>
        <location evidence="9 10 14">Cytoplasm</location>
        <location evidence="9 10 14">Myofibril</location>
        <location evidence="9 10 14">Sarcomere</location>
        <location evidence="9 10 14">Z line</location>
    </subcellularLocation>
    <subcellularLocation>
        <location evidence="8 10">Cytoplasm</location>
    </subcellularLocation>
    <subcellularLocation>
        <location evidence="8">Cell membrane</location>
        <location evidence="8">Sarcolemma</location>
    </subcellularLocation>
    <subcellularLocation>
        <location evidence="10">Nucleus</location>
    </subcellularLocation>
    <subcellularLocation>
        <location evidence="15">Cell tip</location>
    </subcellularLocation>
    <subcellularLocation>
        <location evidence="15">Nucleus envelope</location>
    </subcellularLocation>
    <text evidence="2 10 15">Localizes in the intercalated disks which occur at the Z line of cardiomyocytes (By similarity). Localizes in the nucleus exclusively in differentiating cardiac progenitor cells and premature cardiomyocytes (PubMed:26787680). PKP2 is required for correct anchoring of DES at the cell tip and nuclear envelope (PubMed:35959657).</text>
</comment>
<comment type="tissue specificity">
    <text evidence="10 15">Expressed in mature cardiomyocytes, immature cardiomyocytes and cardiac progenitor cells (at protein level).</text>
</comment>
<comment type="PTM">
    <text evidence="3">ADP-ribosylation prevents ability to form intermediate filaments.</text>
</comment>
<comment type="PTM">
    <text evidence="12">Phosphorylation at Ser-7, Ser-28 and Ser-32 by CDK1, phosphorylation at Ser-60 by AURKB and phosphorylation at Thr-76 by ROCK1 contribute to efficient separation of desmin intermediate filaments during mitosis.</text>
</comment>
<comment type="PTM">
    <text evidence="9">Ubiquitination by a SCF-like complex containing ASB2 isoform 1 leads to proteasomal degradation.</text>
</comment>
<comment type="disruption phenotype">
    <text evidence="13">Mice hearts have reduced nebulette (NEB) and elevated actin levels, with intact myofibers showing disordered NEB organization.</text>
</comment>
<comment type="similarity">
    <text evidence="4">Belongs to the intermediate filament family.</text>
</comment>
<evidence type="ECO:0000250" key="1">
    <source>
        <dbReference type="UniProtKB" id="P02542"/>
    </source>
</evidence>
<evidence type="ECO:0000250" key="2">
    <source>
        <dbReference type="UniProtKB" id="P17661"/>
    </source>
</evidence>
<evidence type="ECO:0000250" key="3">
    <source>
        <dbReference type="UniProtKB" id="P48675"/>
    </source>
</evidence>
<evidence type="ECO:0000255" key="4">
    <source>
        <dbReference type="PROSITE-ProRule" id="PRU01188"/>
    </source>
</evidence>
<evidence type="ECO:0000269" key="5">
    <source>
    </source>
</evidence>
<evidence type="ECO:0000269" key="6">
    <source>
    </source>
</evidence>
<evidence type="ECO:0000269" key="7">
    <source>
    </source>
</evidence>
<evidence type="ECO:0000269" key="8">
    <source>
    </source>
</evidence>
<evidence type="ECO:0000269" key="9">
    <source>
    </source>
</evidence>
<evidence type="ECO:0000269" key="10">
    <source>
    </source>
</evidence>
<evidence type="ECO:0000269" key="11">
    <source>
    </source>
</evidence>
<evidence type="ECO:0000269" key="12">
    <source>
    </source>
</evidence>
<evidence type="ECO:0000269" key="13">
    <source>
    </source>
</evidence>
<evidence type="ECO:0000269" key="14">
    <source>
    </source>
</evidence>
<evidence type="ECO:0000269" key="15">
    <source>
    </source>
</evidence>
<evidence type="ECO:0000269" key="16">
    <source>
    </source>
</evidence>
<evidence type="ECO:0007744" key="17">
    <source>
    </source>
</evidence>
<evidence type="ECO:0007744" key="18">
    <source>
    </source>
</evidence>
<evidence type="ECO:0007744" key="19">
    <source>
    </source>
</evidence>
<gene>
    <name type="primary">Des</name>
</gene>
<protein>
    <recommendedName>
        <fullName>Desmin</fullName>
    </recommendedName>
</protein>
<accession>P31001</accession>
<keyword id="KW-0013">ADP-ribosylation</keyword>
<keyword id="KW-1003">Cell membrane</keyword>
<keyword id="KW-0175">Coiled coil</keyword>
<keyword id="KW-0963">Cytoplasm</keyword>
<keyword id="KW-0403">Intermediate filament</keyword>
<keyword id="KW-0472">Membrane</keyword>
<keyword id="KW-0488">Methylation</keyword>
<keyword id="KW-0514">Muscle protein</keyword>
<keyword id="KW-0539">Nucleus</keyword>
<keyword id="KW-0597">Phosphoprotein</keyword>
<keyword id="KW-1185">Reference proteome</keyword>
<keyword id="KW-0832">Ubl conjugation</keyword>
<reference key="1">
    <citation type="journal article" date="1994" name="J. Cell Biol.">
        <title>Inhibition of desmin expression blocks myoblast fusion and interferes with the myogenic regulators MyoD and myogenin.</title>
        <authorList>
            <person name="Li H."/>
            <person name="Choudhary S.K."/>
            <person name="Milner D.J."/>
            <person name="Munir M.I."/>
            <person name="Kuisk I.R."/>
            <person name="Capetanaki Y."/>
        </authorList>
    </citation>
    <scope>NUCLEOTIDE SEQUENCE [MRNA]</scope>
</reference>
<reference key="2">
    <citation type="journal article" date="2004" name="Genome Res.">
        <title>The status, quality, and expansion of the NIH full-length cDNA project: the Mammalian Gene Collection (MGC).</title>
        <authorList>
            <consortium name="The MGC Project Team"/>
        </authorList>
    </citation>
    <scope>NUCLEOTIDE SEQUENCE [LARGE SCALE MRNA]</scope>
    <source>
        <strain>FVB/N</strain>
        <tissue>Colon</tissue>
    </source>
</reference>
<reference key="3">
    <citation type="journal article" date="1993" name="Nucleic Acids Res.">
        <title>Regulation of the mouse desmin gene: transactivated by MyoD, myogenin, MRF4 and Myf5.</title>
        <authorList>
            <person name="Li H."/>
            <person name="Capetanaki Y."/>
        </authorList>
    </citation>
    <scope>NUCLEOTIDE SEQUENCE [GENOMIC DNA] OF 1-40</scope>
    <source>
        <strain>BALB/cJ</strain>
        <tissue>Spleen</tissue>
    </source>
</reference>
<reference key="4">
    <citation type="journal article" date="1999" name="Dev. Biol.">
        <title>Dystonin-deficient mice exhibit an intrinsic muscle weakness and an instability of skeletal muscle cytoarchitecture.</title>
        <authorList>
            <person name="Dalpe G."/>
            <person name="Mathieu M."/>
            <person name="Comtois A."/>
            <person name="Zhu E."/>
            <person name="Wasiak S."/>
            <person name="De Repentigny Y."/>
            <person name="Leclerc N."/>
            <person name="Kothary R."/>
        </authorList>
    </citation>
    <scope>INTERACTION WITH DST</scope>
</reference>
<reference key="5">
    <citation type="journal article" date="2000" name="J. Cell Sci.">
        <title>Interaction of plakophilins with desmoplakin and intermediate filament proteins: an in vitro analysis.</title>
        <authorList>
            <person name="Hofmann I."/>
            <person name="Mertens C."/>
            <person name="Brettel M."/>
            <person name="Nimmrich V."/>
            <person name="Schnoelzer M."/>
            <person name="Herrmann H."/>
        </authorList>
    </citation>
    <scope>INTERACTION WITH PKP1</scope>
</reference>
<reference key="6">
    <citation type="journal article" date="2007" name="Proc. Natl. Acad. Sci. U.S.A.">
        <title>Large-scale phosphorylation analysis of mouse liver.</title>
        <authorList>
            <person name="Villen J."/>
            <person name="Beausoleil S.A."/>
            <person name="Gerber S.A."/>
            <person name="Gygi S.P."/>
        </authorList>
    </citation>
    <scope>PHOSPHORYLATION [LARGE SCALE ANALYSIS] AT SER-68</scope>
    <scope>IDENTIFICATION BY MASS SPECTROMETRY [LARGE SCALE ANALYSIS]</scope>
    <source>
        <tissue>Liver</tissue>
    </source>
</reference>
<reference key="7">
    <citation type="journal article" date="2010" name="Cell">
        <title>A tissue-specific atlas of mouse protein phosphorylation and expression.</title>
        <authorList>
            <person name="Huttlin E.L."/>
            <person name="Jedrychowski M.P."/>
            <person name="Elias J.E."/>
            <person name="Goswami T."/>
            <person name="Rad R."/>
            <person name="Beausoleil S.A."/>
            <person name="Villen J."/>
            <person name="Haas W."/>
            <person name="Sowa M.E."/>
            <person name="Gygi S.P."/>
        </authorList>
    </citation>
    <scope>PHOSPHORYLATION [LARGE SCALE ANALYSIS] AT THR-17; SER-25; SER-28; SER-31; SER-32; SER-68 AND SER-423</scope>
    <scope>IDENTIFICATION BY MASS SPECTROMETRY [LARGE SCALE ANALYSIS]</scope>
    <source>
        <tissue>Brown adipose tissue</tissue>
        <tissue>Heart</tissue>
        <tissue>Kidney</tissue>
        <tissue>Lung</tissue>
        <tissue>Pancreas</tissue>
        <tissue>Spleen</tissue>
        <tissue>Testis</tissue>
    </source>
</reference>
<reference key="8">
    <citation type="journal article" date="2014" name="J. Invest. Dermatol.">
        <title>Interaction of plectin with keratins 5 and 14: dependence on several plectin domains and keratin quaternary structure.</title>
        <authorList>
            <person name="Bouameur J.E."/>
            <person name="Favre B."/>
            <person name="Fontao L."/>
            <person name="Lingasamy P."/>
            <person name="Begre N."/>
            <person name="Borradori L."/>
        </authorList>
    </citation>
    <scope>INTERACTION WITH PLEC</scope>
</reference>
<reference key="9">
    <citation type="journal article" date="2014" name="Mol. Cell. Proteomics">
        <title>Immunoaffinity enrichment and mass spectrometry analysis of protein methylation.</title>
        <authorList>
            <person name="Guo A."/>
            <person name="Gu H."/>
            <person name="Zhou J."/>
            <person name="Mulhern D."/>
            <person name="Wang Y."/>
            <person name="Lee K.A."/>
            <person name="Yang V."/>
            <person name="Aguiar M."/>
            <person name="Kornhauser J."/>
            <person name="Jia X."/>
            <person name="Ren J."/>
            <person name="Beausoleil S.A."/>
            <person name="Silva J.C."/>
            <person name="Vemulapalli V."/>
            <person name="Bedford M.T."/>
            <person name="Comb M.J."/>
        </authorList>
    </citation>
    <scope>METHYLATION [LARGE SCALE ANALYSIS] AT ARG-16; ARG-37 AND ARG-70</scope>
    <scope>IDENTIFICATION BY MASS SPECTROMETRY [LARGE SCALE ANALYSIS]</scope>
    <source>
        <tissue>Brain</tissue>
        <tissue>Embryo</tissue>
    </source>
</reference>
<reference key="10">
    <citation type="journal article" date="2015" name="Acta Neuropathol.">
        <title>The toxic effect of R350P mutant desmin in striated muscle of man and mouse.</title>
        <authorList>
            <person name="Clemen C.S."/>
            <person name="Stoeckigt F."/>
            <person name="Strucksberg K.H."/>
            <person name="Chevessier F."/>
            <person name="Winter L."/>
            <person name="Schuetz J."/>
            <person name="Bauer R."/>
            <person name="Thorweihe J.M."/>
            <person name="Wenzel D."/>
            <person name="Schloetzer-Schrehardt U."/>
            <person name="Rasche V."/>
            <person name="Krsmanovic P."/>
            <person name="Katus H.A."/>
            <person name="Rottbauer W."/>
            <person name="Just S."/>
            <person name="Mueller O.J."/>
            <person name="Friedrich O."/>
            <person name="Meyer R."/>
            <person name="Herrmann H."/>
            <person name="Schrickel J.W."/>
            <person name="Schroeder R."/>
        </authorList>
    </citation>
    <scope>FUNCTION</scope>
    <scope>MUTAGENESIS OF ARG-349</scope>
    <scope>SUBCELLULAR LOCATION</scope>
</reference>
<reference key="11">
    <citation type="journal article" date="2015" name="J. Mol. Cell. Cardiol.">
        <title>The E3 ubiquitin ligase Asb2beta is downregulated in a mouse model of hypertrophic cardiomyopathy and targets desmin for proteasomal degradation.</title>
        <authorList>
            <person name="Thottakara T."/>
            <person name="Friedrich F.W."/>
            <person name="Reischmann S."/>
            <person name="Braumann S."/>
            <person name="Schlossarek S."/>
            <person name="Kraemer E."/>
            <person name="Juhr D."/>
            <person name="Schlueter H."/>
            <person name="van der Velden J."/>
            <person name="Muench J."/>
            <person name="Patten M."/>
            <person name="Eschenhagen T."/>
            <person name="Moog-Lutz C."/>
            <person name="Carrier L."/>
        </authorList>
    </citation>
    <scope>INTERACTION WITH ASB2</scope>
    <scope>SUBCELLULAR LOCATION</scope>
    <scope>PROTEASOMAL DEGRADATION</scope>
</reference>
<reference key="12">
    <citation type="journal article" date="2016" name="Biochem. Biophys. Res. Commun.">
        <title>Desmin phosphorylation by Cdk1 is required for efficient separation of desmin intermediate filaments in mitosis and detected in murine embryonic/newborn muscle and human rhabdomyosarcoma tissues.</title>
        <authorList>
            <person name="Makihara H."/>
            <person name="Inaba H."/>
            <person name="Enomoto A."/>
            <person name="Tanaka H."/>
            <person name="Tomono Y."/>
            <person name="Ushida K."/>
            <person name="Goto M."/>
            <person name="Kurita K."/>
            <person name="Nishida Y."/>
            <person name="Kasahara K."/>
            <person name="Goto H."/>
            <person name="Inagaki M."/>
        </authorList>
    </citation>
    <scope>PHOSPHORYLATION AT SER-7; SER-28; SER-32; SER-60 AND THR-76</scope>
    <scope>MUTAGENESIS OF SER-7; SER-28; SER-32; SER-60 AND THR-76</scope>
</reference>
<reference key="13">
    <citation type="journal article" date="2016" name="Biol. Open">
        <title>Desmin enters the nucleus of cardiac stem cells and modulates Nkx2.5 expression by participating in transcription factor complexes that interact with the nkx2.5 gene.</title>
        <authorList>
            <person name="Fuchs C."/>
            <person name="Gawlas S."/>
            <person name="Heher P."/>
            <person name="Nikouli S."/>
            <person name="Paar H."/>
            <person name="Ivankovic M."/>
            <person name="Schultheis M."/>
            <person name="Klammer J."/>
            <person name="Gottschamel T."/>
            <person name="Capetanaki Y."/>
            <person name="Weitzer G."/>
        </authorList>
    </citation>
    <scope>FUNCTION</scope>
    <scope>SUBCELLULAR LOCATION</scope>
    <scope>TISSUE SPECIFICITY</scope>
</reference>
<reference key="14">
    <citation type="journal article" date="2016" name="Mol. Biol. Cell">
        <title>Nebulette is a powerful cytolinker organizing desmin and actin in mouse hearts.</title>
        <authorList>
            <person name="Hernandez D.A."/>
            <person name="Bennett C.M."/>
            <person name="Dunina-Barkovskaya L."/>
            <person name="Wedig T."/>
            <person name="Capetanaki Y."/>
            <person name="Herrmann H."/>
            <person name="Conover G.M."/>
        </authorList>
    </citation>
    <scope>FUNCTION</scope>
    <scope>DISRUPTION PHENOTYPE</scope>
</reference>
<reference key="15">
    <citation type="journal article" date="2016" name="Science">
        <title>Detyrosinated microtubules buckle and bear load in contracting cardiomyocytes.</title>
        <authorList>
            <person name="Robison P."/>
            <person name="Caporizzo M.A."/>
            <person name="Ahmadzadeh H."/>
            <person name="Bogush A.I."/>
            <person name="Chen C.Y."/>
            <person name="Margulies K.B."/>
            <person name="Shenoy V.B."/>
            <person name="Prosser B.L."/>
        </authorList>
    </citation>
    <scope>FUNCTION</scope>
    <scope>INTERACTION WITH TUBULIN</scope>
</reference>
<reference key="16">
    <citation type="journal article" date="2017" name="Sci. Rep.">
        <title>Early signs of architectural and biomechanical failure in isolated myofibers and immortalized myoblasts from desmin-mutant knock-in mice.</title>
        <authorList>
            <person name="Diermeier S."/>
            <person name="Iberl J."/>
            <person name="Vetter K."/>
            <person name="Haug M."/>
            <person name="Pollmann C."/>
            <person name="Reischl B."/>
            <person name="Buttgereit A."/>
            <person name="Schuermann S."/>
            <person name="Spoerrer M."/>
            <person name="Goldmann W.H."/>
            <person name="Fabry B."/>
            <person name="Elhamine F."/>
            <person name="Stehle R."/>
            <person name="Pfitzer G."/>
            <person name="Winter L."/>
            <person name="Clemen C.S."/>
            <person name="Herrmann H."/>
            <person name="Schroeder R."/>
            <person name="Friedrich O."/>
        </authorList>
    </citation>
    <scope>MUTAGENESIS OF ARG-349</scope>
    <scope>SUBCELLULAR LOCATION</scope>
</reference>
<reference key="17">
    <citation type="journal article" date="2022" name="Circulation">
        <title>Loss of Nuclear Envelope Integrity and Increased Oxidant Production Cause DNA Damage in Adult Hearts Deficient in PKP2: A Molecular Substrate of ARVC.</title>
        <authorList>
            <person name="Perez-Hernandez M."/>
            <person name="van Opbergen C.J.M."/>
            <person name="Bagwan N."/>
            <person name="Vissing C.R."/>
            <person name="Marron-Linares G.M."/>
            <person name="Zhang M."/>
            <person name="Torres Vega E."/>
            <person name="Sorrentino A."/>
            <person name="Drici L."/>
            <person name="Sulek K."/>
            <person name="Zhai R."/>
            <person name="Hansen F.B."/>
            <person name="Christensen A.H."/>
            <person name="Boesgaard S."/>
            <person name="Gustafsson F."/>
            <person name="Rossing K."/>
            <person name="Small E.M."/>
            <person name="Davies M.J."/>
            <person name="Rothenberg E."/>
            <person name="Sato P.Y."/>
            <person name="Cerrone M."/>
            <person name="Jensen T.H.L."/>
            <person name="Qvortrup K."/>
            <person name="Bundgaard H."/>
            <person name="Delmar M."/>
            <person name="Lundby A."/>
        </authorList>
    </citation>
    <scope>FUNCTION</scope>
    <scope>SUBCELLULAR LOCATION</scope>
    <scope>TISSUE SPECIFICITY</scope>
</reference>
<reference key="18">
    <citation type="journal article" date="2023" name="Proc. Natl. Acad. Sci. U.S.A.">
        <title>A human FLII gene variant alters sarcomeric actin thin filament length and predisposes to cardiomyopathy.</title>
        <authorList>
            <person name="Kuwabara Y."/>
            <person name="York A.J."/>
            <person name="Lin S.C."/>
            <person name="Sargent M.A."/>
            <person name="Grimes K.M."/>
            <person name="Pirruccello J.P."/>
            <person name="Molkentin J.D."/>
        </authorList>
    </citation>
    <scope>INTERACTION WITH FLII</scope>
</reference>
<proteinExistence type="evidence at protein level"/>
<dbReference type="EMBL" id="L22550">
    <property type="status" value="NOT_ANNOTATED_CDS"/>
    <property type="molecule type" value="mRNA"/>
</dbReference>
<dbReference type="EMBL" id="BC031760">
    <property type="protein sequence ID" value="AAH31760.1"/>
    <property type="molecule type" value="mRNA"/>
</dbReference>
<dbReference type="EMBL" id="Z18892">
    <property type="protein sequence ID" value="CAA79330.1"/>
    <property type="molecule type" value="Genomic_DNA"/>
</dbReference>
<dbReference type="CCDS" id="CCDS15071.1"/>
<dbReference type="PIR" id="A54104">
    <property type="entry name" value="A54104"/>
</dbReference>
<dbReference type="RefSeq" id="NP_034173.1">
    <property type="nucleotide sequence ID" value="NM_010043.2"/>
</dbReference>
<dbReference type="SMR" id="P31001"/>
<dbReference type="BioGRID" id="199210">
    <property type="interactions" value="12"/>
</dbReference>
<dbReference type="DIP" id="DIP-256N"/>
<dbReference type="FunCoup" id="P31001">
    <property type="interactions" value="371"/>
</dbReference>
<dbReference type="IntAct" id="P31001">
    <property type="interactions" value="15"/>
</dbReference>
<dbReference type="MINT" id="P31001"/>
<dbReference type="STRING" id="10090.ENSMUSP00000027409"/>
<dbReference type="GlyGen" id="P31001">
    <property type="glycosylation" value="1 site, 1 O-linked glycan (1 site)"/>
</dbReference>
<dbReference type="iPTMnet" id="P31001"/>
<dbReference type="PhosphoSitePlus" id="P31001"/>
<dbReference type="jPOST" id="P31001"/>
<dbReference type="PaxDb" id="10090-ENSMUSP00000027409"/>
<dbReference type="PeptideAtlas" id="P31001"/>
<dbReference type="ProteomicsDB" id="277981"/>
<dbReference type="Pumba" id="P31001"/>
<dbReference type="Antibodypedia" id="3503">
    <property type="antibodies" value="1562 antibodies from 53 providers"/>
</dbReference>
<dbReference type="DNASU" id="13346"/>
<dbReference type="Ensembl" id="ENSMUST00000027409.10">
    <property type="protein sequence ID" value="ENSMUSP00000027409.10"/>
    <property type="gene ID" value="ENSMUSG00000026208.10"/>
</dbReference>
<dbReference type="GeneID" id="13346"/>
<dbReference type="KEGG" id="mmu:13346"/>
<dbReference type="UCSC" id="uc007box.2">
    <property type="organism name" value="mouse"/>
</dbReference>
<dbReference type="AGR" id="MGI:94885"/>
<dbReference type="CTD" id="1674"/>
<dbReference type="MGI" id="MGI:94885">
    <property type="gene designation" value="Des"/>
</dbReference>
<dbReference type="VEuPathDB" id="HostDB:ENSMUSG00000026208"/>
<dbReference type="eggNOG" id="KOG0977">
    <property type="taxonomic scope" value="Eukaryota"/>
</dbReference>
<dbReference type="GeneTree" id="ENSGT00940000155522"/>
<dbReference type="HOGENOM" id="CLU_012560_7_4_1"/>
<dbReference type="InParanoid" id="P31001"/>
<dbReference type="OMA" id="DMEERHG"/>
<dbReference type="OrthoDB" id="2441647at2759"/>
<dbReference type="PhylomeDB" id="P31001"/>
<dbReference type="TreeFam" id="TF330122"/>
<dbReference type="Reactome" id="R-MMU-390522">
    <property type="pathway name" value="Striated Muscle Contraction"/>
</dbReference>
<dbReference type="BioGRID-ORCS" id="13346">
    <property type="hits" value="5 hits in 78 CRISPR screens"/>
</dbReference>
<dbReference type="CD-CODE" id="CE726F99">
    <property type="entry name" value="Postsynaptic density"/>
</dbReference>
<dbReference type="PRO" id="PR:P31001"/>
<dbReference type="Proteomes" id="UP000000589">
    <property type="component" value="Chromosome 1"/>
</dbReference>
<dbReference type="RNAct" id="P31001">
    <property type="molecule type" value="protein"/>
</dbReference>
<dbReference type="Bgee" id="ENSMUSG00000026208">
    <property type="expression patterns" value="Expressed in hindlimb stylopod muscle and 162 other cell types or tissues"/>
</dbReference>
<dbReference type="ExpressionAtlas" id="P31001">
    <property type="expression patterns" value="baseline and differential"/>
</dbReference>
<dbReference type="GO" id="GO:0097512">
    <property type="term" value="C:cardiac myofibril"/>
    <property type="evidence" value="ECO:0007669"/>
    <property type="project" value="Ensembl"/>
</dbReference>
<dbReference type="GO" id="GO:0051286">
    <property type="term" value="C:cell tip"/>
    <property type="evidence" value="ECO:0000314"/>
    <property type="project" value="UniProtKB"/>
</dbReference>
<dbReference type="GO" id="GO:0005911">
    <property type="term" value="C:cell-cell junction"/>
    <property type="evidence" value="ECO:0000314"/>
    <property type="project" value="MGI"/>
</dbReference>
<dbReference type="GO" id="GO:0043292">
    <property type="term" value="C:contractile muscle fiber"/>
    <property type="evidence" value="ECO:0000314"/>
    <property type="project" value="MGI"/>
</dbReference>
<dbReference type="GO" id="GO:0005737">
    <property type="term" value="C:cytoplasm"/>
    <property type="evidence" value="ECO:0000314"/>
    <property type="project" value="UniProtKB"/>
</dbReference>
<dbReference type="GO" id="GO:0005856">
    <property type="term" value="C:cytoskeleton"/>
    <property type="evidence" value="ECO:0000314"/>
    <property type="project" value="MGI"/>
</dbReference>
<dbReference type="GO" id="GO:0005916">
    <property type="term" value="C:fascia adherens"/>
    <property type="evidence" value="ECO:0000314"/>
    <property type="project" value="MGI"/>
</dbReference>
<dbReference type="GO" id="GO:0005882">
    <property type="term" value="C:intermediate filament"/>
    <property type="evidence" value="ECO:0007669"/>
    <property type="project" value="UniProtKB-KW"/>
</dbReference>
<dbReference type="GO" id="GO:0031594">
    <property type="term" value="C:neuromuscular junction"/>
    <property type="evidence" value="ECO:0000314"/>
    <property type="project" value="MGI"/>
</dbReference>
<dbReference type="GO" id="GO:0005635">
    <property type="term" value="C:nuclear envelope"/>
    <property type="evidence" value="ECO:0000314"/>
    <property type="project" value="UniProtKB"/>
</dbReference>
<dbReference type="GO" id="GO:0005634">
    <property type="term" value="C:nucleus"/>
    <property type="evidence" value="ECO:0000314"/>
    <property type="project" value="UniProtKB"/>
</dbReference>
<dbReference type="GO" id="GO:0042383">
    <property type="term" value="C:sarcolemma"/>
    <property type="evidence" value="ECO:0000314"/>
    <property type="project" value="UniProtKB"/>
</dbReference>
<dbReference type="GO" id="GO:0030018">
    <property type="term" value="C:Z disc"/>
    <property type="evidence" value="ECO:0000314"/>
    <property type="project" value="UniProtKB"/>
</dbReference>
<dbReference type="GO" id="GO:0008092">
    <property type="term" value="F:cytoskeletal protein binding"/>
    <property type="evidence" value="ECO:0007669"/>
    <property type="project" value="Ensembl"/>
</dbReference>
<dbReference type="GO" id="GO:0042802">
    <property type="term" value="F:identical protein binding"/>
    <property type="evidence" value="ECO:0007669"/>
    <property type="project" value="Ensembl"/>
</dbReference>
<dbReference type="GO" id="GO:0005200">
    <property type="term" value="F:structural constituent of cytoskeleton"/>
    <property type="evidence" value="ECO:0000304"/>
    <property type="project" value="MGI"/>
</dbReference>
<dbReference type="GO" id="GO:0045109">
    <property type="term" value="P:intermediate filament organization"/>
    <property type="evidence" value="ECO:0000250"/>
    <property type="project" value="UniProtKB"/>
</dbReference>
<dbReference type="GO" id="GO:0007517">
    <property type="term" value="P:muscle organ development"/>
    <property type="evidence" value="ECO:0000304"/>
    <property type="project" value="MGI"/>
</dbReference>
<dbReference type="GO" id="GO:0006998">
    <property type="term" value="P:nuclear envelope organization"/>
    <property type="evidence" value="ECO:0000315"/>
    <property type="project" value="UniProtKB"/>
</dbReference>
<dbReference type="FunFam" id="1.20.5.1160:FF:000001">
    <property type="entry name" value="Keratin type II"/>
    <property type="match status" value="1"/>
</dbReference>
<dbReference type="FunFam" id="1.20.5.170:FF:000002">
    <property type="entry name" value="Type I keratin KA11"/>
    <property type="match status" value="1"/>
</dbReference>
<dbReference type="FunFam" id="1.20.5.500:FF:000001">
    <property type="entry name" value="Type II keratin 23"/>
    <property type="match status" value="1"/>
</dbReference>
<dbReference type="Gene3D" id="1.20.5.170">
    <property type="match status" value="1"/>
</dbReference>
<dbReference type="Gene3D" id="1.20.5.500">
    <property type="entry name" value="Single helix bin"/>
    <property type="match status" value="1"/>
</dbReference>
<dbReference type="Gene3D" id="1.20.5.1160">
    <property type="entry name" value="Vasodilator-stimulated phosphoprotein"/>
    <property type="match status" value="1"/>
</dbReference>
<dbReference type="InterPro" id="IPR018039">
    <property type="entry name" value="IF_conserved"/>
</dbReference>
<dbReference type="InterPro" id="IPR039008">
    <property type="entry name" value="IF_rod_dom"/>
</dbReference>
<dbReference type="InterPro" id="IPR006821">
    <property type="entry name" value="Intermed_filament_DNA-bd"/>
</dbReference>
<dbReference type="InterPro" id="IPR050405">
    <property type="entry name" value="Intermediate_filament"/>
</dbReference>
<dbReference type="PANTHER" id="PTHR45652:SF2">
    <property type="entry name" value="DESMIN"/>
    <property type="match status" value="1"/>
</dbReference>
<dbReference type="PANTHER" id="PTHR45652">
    <property type="entry name" value="GLIAL FIBRILLARY ACIDIC PROTEIN"/>
    <property type="match status" value="1"/>
</dbReference>
<dbReference type="Pfam" id="PF00038">
    <property type="entry name" value="Filament"/>
    <property type="match status" value="1"/>
</dbReference>
<dbReference type="Pfam" id="PF04732">
    <property type="entry name" value="Filament_head"/>
    <property type="match status" value="1"/>
</dbReference>
<dbReference type="SMART" id="SM01391">
    <property type="entry name" value="Filament"/>
    <property type="match status" value="1"/>
</dbReference>
<dbReference type="SUPFAM" id="SSF64593">
    <property type="entry name" value="Intermediate filament protein, coiled coil region"/>
    <property type="match status" value="2"/>
</dbReference>
<dbReference type="PROSITE" id="PS00226">
    <property type="entry name" value="IF_ROD_1"/>
    <property type="match status" value="1"/>
</dbReference>
<dbReference type="PROSITE" id="PS51842">
    <property type="entry name" value="IF_ROD_2"/>
    <property type="match status" value="1"/>
</dbReference>
<organism>
    <name type="scientific">Mus musculus</name>
    <name type="common">Mouse</name>
    <dbReference type="NCBI Taxonomy" id="10090"/>
    <lineage>
        <taxon>Eukaryota</taxon>
        <taxon>Metazoa</taxon>
        <taxon>Chordata</taxon>
        <taxon>Craniata</taxon>
        <taxon>Vertebrata</taxon>
        <taxon>Euteleostomi</taxon>
        <taxon>Mammalia</taxon>
        <taxon>Eutheria</taxon>
        <taxon>Euarchontoglires</taxon>
        <taxon>Glires</taxon>
        <taxon>Rodentia</taxon>
        <taxon>Myomorpha</taxon>
        <taxon>Muroidea</taxon>
        <taxon>Muridae</taxon>
        <taxon>Murinae</taxon>
        <taxon>Mus</taxon>
        <taxon>Mus</taxon>
    </lineage>
</organism>
<feature type="initiator methionine" description="Removed" evidence="1">
    <location>
        <position position="1"/>
    </location>
</feature>
<feature type="chain" id="PRO_0000063773" description="Desmin">
    <location>
        <begin position="2"/>
        <end position="469"/>
    </location>
</feature>
<feature type="domain" description="IF rod" evidence="4">
    <location>
        <begin position="107"/>
        <end position="415"/>
    </location>
</feature>
<feature type="region of interest" description="Head">
    <location>
        <begin position="2"/>
        <end position="108"/>
    </location>
</feature>
<feature type="region of interest" description="Coil 1A">
    <location>
        <begin position="109"/>
        <end position="140"/>
    </location>
</feature>
<feature type="region of interest" description="Linker 1">
    <location>
        <begin position="141"/>
        <end position="150"/>
    </location>
</feature>
<feature type="region of interest" description="Coil 1B">
    <location>
        <begin position="151"/>
        <end position="251"/>
    </location>
</feature>
<feature type="region of interest" description="Linker 12">
    <location>
        <begin position="252"/>
        <end position="267"/>
    </location>
</feature>
<feature type="region of interest" description="Interaction with NEB" evidence="2">
    <location>
        <begin position="267"/>
        <end position="414"/>
    </location>
</feature>
<feature type="region of interest" description="Coil 2A">
    <location>
        <begin position="268"/>
        <end position="286"/>
    </location>
</feature>
<feature type="region of interest" description="Linker 2">
    <location>
        <begin position="287"/>
        <end position="294"/>
    </location>
</feature>
<feature type="region of interest" description="Coil 2B">
    <location>
        <begin position="295"/>
        <end position="411"/>
    </location>
</feature>
<feature type="region of interest" description="Tail">
    <location>
        <begin position="412"/>
        <end position="469"/>
    </location>
</feature>
<feature type="region of interest" description="Interaction with CRYAB" evidence="2">
    <location>
        <begin position="437"/>
        <end position="452"/>
    </location>
</feature>
<feature type="site" description="Stutter">
    <location>
        <position position="353"/>
    </location>
</feature>
<feature type="modified residue" description="Phosphoserine; by CDK1" evidence="12">
    <location>
        <position position="7"/>
    </location>
</feature>
<feature type="modified residue" description="Phosphoserine; by AURKB" evidence="2">
    <location>
        <position position="12"/>
    </location>
</feature>
<feature type="modified residue" description="Omega-N-methylarginine" evidence="19">
    <location>
        <position position="16"/>
    </location>
</feature>
<feature type="modified residue" description="Phosphothreonine; by AURKB and ROCK1" evidence="18">
    <location>
        <position position="17"/>
    </location>
</feature>
<feature type="modified residue" description="Phosphoserine" evidence="18">
    <location>
        <position position="25"/>
    </location>
</feature>
<feature type="modified residue" description="Phosphoserine; by CDK1" evidence="12 18">
    <location>
        <position position="28"/>
    </location>
</feature>
<feature type="modified residue" description="Phosphoserine" evidence="18">
    <location>
        <position position="31"/>
    </location>
</feature>
<feature type="modified residue" description="Phosphoserine; by CDK1" evidence="12 18">
    <location>
        <position position="32"/>
    </location>
</feature>
<feature type="modified residue" description="Asymmetric dimethylarginine; alternate" evidence="19">
    <location>
        <position position="37"/>
    </location>
</feature>
<feature type="modified residue" description="Omega-N-methylarginine; alternate" evidence="19">
    <location>
        <position position="37"/>
    </location>
</feature>
<feature type="modified residue" description="Phosphoserine" evidence="3">
    <location>
        <position position="45"/>
    </location>
</feature>
<feature type="modified residue" description="ADP-ribosylarginine" evidence="3">
    <location>
        <position position="58"/>
    </location>
</feature>
<feature type="modified residue" description="Phosphoserine; by AURKB" evidence="12">
    <location>
        <position position="60"/>
    </location>
</feature>
<feature type="modified residue" description="Phosphoserine" evidence="17 18">
    <location>
        <position position="68"/>
    </location>
</feature>
<feature type="modified residue" description="Omega-N-methylarginine" evidence="19">
    <location>
        <position position="70"/>
    </location>
</feature>
<feature type="modified residue" description="Phosphothreonine; by ROCK1" evidence="12">
    <location>
        <position position="76"/>
    </location>
</feature>
<feature type="modified residue" description="Phosphothreonine; by ROCK1" evidence="2">
    <location>
        <position position="77"/>
    </location>
</feature>
<feature type="modified residue" description="Phosphoserine" evidence="3">
    <location>
        <position position="81"/>
    </location>
</feature>
<feature type="modified residue" description="Phosphoserine" evidence="3">
    <location>
        <position position="289"/>
    </location>
</feature>
<feature type="modified residue" description="Phosphoserine" evidence="3">
    <location>
        <position position="357"/>
    </location>
</feature>
<feature type="modified residue" description="Phosphoserine" evidence="18">
    <location>
        <position position="423"/>
    </location>
</feature>
<feature type="mutagenesis site" description="Reduced phosphorylation. Almost complete loss of phosphorylation; when associated with A-28 and A-32." evidence="12">
    <original>S</original>
    <variation>A</variation>
    <location>
        <position position="7"/>
    </location>
</feature>
<feature type="mutagenesis site" description="Reduced phosphorylation. Almost complete loss of phosphorylation; when associated with A-7 and A-32." evidence="12">
    <original>S</original>
    <variation>A</variation>
    <location>
        <position position="28"/>
    </location>
</feature>
<feature type="mutagenesis site" description="Reduced phosphorylation and formation of unusual long bridge-like intermediate filament structures between two daughter cells during cytokinesis. Almost complete loss of phosphorylation; when associated with A-7 and A-28. Increased formation of unusual long bridge-like intermediate filament structures between two daughter cells during cytokinesis; when associated with A-60 and A-76." evidence="12">
    <original>S</original>
    <variation>A</variation>
    <location>
        <position position="32"/>
    </location>
</feature>
<feature type="mutagenesis site" description="Formation of unusual long bridge-like intermediate filament structures between two daughter cells during cytokinesis; when associated with A-76. Increased formation of unusual long bridge-like intermediate filament structures between two daughter cells during cytokinesis; when associated with A-32 and A-76." evidence="12">
    <original>S</original>
    <variation>A</variation>
    <location>
        <position position="60"/>
    </location>
</feature>
<feature type="mutagenesis site" description="Formation of unusual long bridge-like intermediate filament structures between two daughter cells during cytokinesis; when associated with A-60. Increased formation of unusual long bridge-like intermediate filament structures between two daughter cells during cytokinesis; when associated with A-32 and A-60." evidence="12">
    <original>T</original>
    <variation>A</variation>
    <location>
        <position position="76"/>
    </location>
</feature>
<feature type="mutagenesis site" description="Increases protein decay. forms subsarcolemmal aggregates. Changes the subcellular localization and turnover of its direct, extrasarcomeric binding partners. Knockin mice develop age-dependent desmin-positive protein aggregation pathology, skeletal muscle weakness, dilated cardiomyopathy, as well as cardiac arrhythmias and conduction defects. Knockin mice exhibit altered axial myofibrillar lattice arrangement in fast- and slow-twitch muscle fibers, increased axial stiffness and stretch-induced vulnerability in soleus muscle fiber bundles, reduced Ca(2+)-sensitivity in heterozygous fiber bundles and increased Ca(2+)-sensitivity in homozygous fiber bundles." evidence="8">
    <original>R</original>
    <variation>P</variation>
    <location>
        <position position="349"/>
    </location>
</feature>
<name>DESM_MOUSE</name>